<evidence type="ECO:0000255" key="1">
    <source>
        <dbReference type="HAMAP-Rule" id="MF_00012"/>
    </source>
</evidence>
<comment type="function">
    <text evidence="1">Functions in the biosynthesis of branched-chain amino acids. Catalyzes the dehydration of (2R,3R)-2,3-dihydroxy-3-methylpentanoate (2,3-dihydroxy-3-methylvalerate) into 2-oxo-3-methylpentanoate (2-oxo-3-methylvalerate) and of (2R)-2,3-dihydroxy-3-methylbutanoate (2,3-dihydroxyisovalerate) into 2-oxo-3-methylbutanoate (2-oxoisovalerate), the penultimate precursor to L-isoleucine and L-valine, respectively.</text>
</comment>
<comment type="catalytic activity">
    <reaction evidence="1">
        <text>(2R)-2,3-dihydroxy-3-methylbutanoate = 3-methyl-2-oxobutanoate + H2O</text>
        <dbReference type="Rhea" id="RHEA:24809"/>
        <dbReference type="ChEBI" id="CHEBI:11851"/>
        <dbReference type="ChEBI" id="CHEBI:15377"/>
        <dbReference type="ChEBI" id="CHEBI:49072"/>
        <dbReference type="EC" id="4.2.1.9"/>
    </reaction>
    <physiologicalReaction direction="left-to-right" evidence="1">
        <dbReference type="Rhea" id="RHEA:24810"/>
    </physiologicalReaction>
</comment>
<comment type="catalytic activity">
    <reaction evidence="1">
        <text>(2R,3R)-2,3-dihydroxy-3-methylpentanoate = (S)-3-methyl-2-oxopentanoate + H2O</text>
        <dbReference type="Rhea" id="RHEA:27694"/>
        <dbReference type="ChEBI" id="CHEBI:15377"/>
        <dbReference type="ChEBI" id="CHEBI:35146"/>
        <dbReference type="ChEBI" id="CHEBI:49258"/>
        <dbReference type="EC" id="4.2.1.9"/>
    </reaction>
    <physiologicalReaction direction="left-to-right" evidence="1">
        <dbReference type="Rhea" id="RHEA:27695"/>
    </physiologicalReaction>
</comment>
<comment type="cofactor">
    <cofactor evidence="1">
        <name>[2Fe-2S] cluster</name>
        <dbReference type="ChEBI" id="CHEBI:190135"/>
    </cofactor>
    <text evidence="1">Binds 1 [2Fe-2S] cluster per subunit. This cluster acts as a Lewis acid cofactor.</text>
</comment>
<comment type="cofactor">
    <cofactor evidence="1">
        <name>Mg(2+)</name>
        <dbReference type="ChEBI" id="CHEBI:18420"/>
    </cofactor>
</comment>
<comment type="pathway">
    <text evidence="1">Amino-acid biosynthesis; L-isoleucine biosynthesis; L-isoleucine from 2-oxobutanoate: step 3/4.</text>
</comment>
<comment type="pathway">
    <text evidence="1">Amino-acid biosynthesis; L-valine biosynthesis; L-valine from pyruvate: step 3/4.</text>
</comment>
<comment type="subunit">
    <text evidence="1">Homodimer.</text>
</comment>
<comment type="similarity">
    <text evidence="1">Belongs to the IlvD/Edd family.</text>
</comment>
<gene>
    <name evidence="1" type="primary">ilvD</name>
    <name type="ordered locus">Arad_2022</name>
</gene>
<dbReference type="EC" id="4.2.1.9" evidence="1"/>
<dbReference type="EMBL" id="CP000628">
    <property type="protein sequence ID" value="ACM26313.1"/>
    <property type="molecule type" value="Genomic_DNA"/>
</dbReference>
<dbReference type="RefSeq" id="WP_007690810.1">
    <property type="nucleotide sequence ID" value="NC_011985.1"/>
</dbReference>
<dbReference type="SMR" id="B9JDW2"/>
<dbReference type="STRING" id="311403.Arad_2022"/>
<dbReference type="KEGG" id="ara:Arad_2022"/>
<dbReference type="eggNOG" id="COG0129">
    <property type="taxonomic scope" value="Bacteria"/>
</dbReference>
<dbReference type="HOGENOM" id="CLU_014271_4_2_5"/>
<dbReference type="UniPathway" id="UPA00047">
    <property type="reaction ID" value="UER00057"/>
</dbReference>
<dbReference type="UniPathway" id="UPA00049">
    <property type="reaction ID" value="UER00061"/>
</dbReference>
<dbReference type="Proteomes" id="UP000001600">
    <property type="component" value="Chromosome 1"/>
</dbReference>
<dbReference type="GO" id="GO:0005829">
    <property type="term" value="C:cytosol"/>
    <property type="evidence" value="ECO:0007669"/>
    <property type="project" value="TreeGrafter"/>
</dbReference>
<dbReference type="GO" id="GO:0051537">
    <property type="term" value="F:2 iron, 2 sulfur cluster binding"/>
    <property type="evidence" value="ECO:0007669"/>
    <property type="project" value="UniProtKB-UniRule"/>
</dbReference>
<dbReference type="GO" id="GO:0004160">
    <property type="term" value="F:dihydroxy-acid dehydratase activity"/>
    <property type="evidence" value="ECO:0007669"/>
    <property type="project" value="UniProtKB-UniRule"/>
</dbReference>
<dbReference type="GO" id="GO:0000287">
    <property type="term" value="F:magnesium ion binding"/>
    <property type="evidence" value="ECO:0007669"/>
    <property type="project" value="UniProtKB-UniRule"/>
</dbReference>
<dbReference type="GO" id="GO:0009097">
    <property type="term" value="P:isoleucine biosynthetic process"/>
    <property type="evidence" value="ECO:0007669"/>
    <property type="project" value="UniProtKB-UniRule"/>
</dbReference>
<dbReference type="GO" id="GO:0009099">
    <property type="term" value="P:L-valine biosynthetic process"/>
    <property type="evidence" value="ECO:0007669"/>
    <property type="project" value="UniProtKB-UniRule"/>
</dbReference>
<dbReference type="FunFam" id="3.50.30.80:FF:000001">
    <property type="entry name" value="Dihydroxy-acid dehydratase"/>
    <property type="match status" value="1"/>
</dbReference>
<dbReference type="Gene3D" id="3.50.30.80">
    <property type="entry name" value="IlvD/EDD C-terminal domain-like"/>
    <property type="match status" value="1"/>
</dbReference>
<dbReference type="HAMAP" id="MF_00012">
    <property type="entry name" value="IlvD"/>
    <property type="match status" value="1"/>
</dbReference>
<dbReference type="InterPro" id="IPR042096">
    <property type="entry name" value="Dihydro-acid_dehy_C"/>
</dbReference>
<dbReference type="InterPro" id="IPR004404">
    <property type="entry name" value="DihydroxyA_deHydtase"/>
</dbReference>
<dbReference type="InterPro" id="IPR020558">
    <property type="entry name" value="DiOHA_6PGluconate_deHydtase_CS"/>
</dbReference>
<dbReference type="InterPro" id="IPR056740">
    <property type="entry name" value="ILV_EDD_C"/>
</dbReference>
<dbReference type="InterPro" id="IPR000581">
    <property type="entry name" value="ILV_EDD_N"/>
</dbReference>
<dbReference type="InterPro" id="IPR037237">
    <property type="entry name" value="IlvD/EDD_N"/>
</dbReference>
<dbReference type="NCBIfam" id="TIGR00110">
    <property type="entry name" value="ilvD"/>
    <property type="match status" value="1"/>
</dbReference>
<dbReference type="NCBIfam" id="NF009103">
    <property type="entry name" value="PRK12448.1"/>
    <property type="match status" value="1"/>
</dbReference>
<dbReference type="PANTHER" id="PTHR43661">
    <property type="entry name" value="D-XYLONATE DEHYDRATASE"/>
    <property type="match status" value="1"/>
</dbReference>
<dbReference type="PANTHER" id="PTHR43661:SF3">
    <property type="entry name" value="D-XYLONATE DEHYDRATASE YAGF-RELATED"/>
    <property type="match status" value="1"/>
</dbReference>
<dbReference type="Pfam" id="PF24877">
    <property type="entry name" value="ILV_EDD_C"/>
    <property type="match status" value="1"/>
</dbReference>
<dbReference type="Pfam" id="PF00920">
    <property type="entry name" value="ILVD_EDD_N"/>
    <property type="match status" value="1"/>
</dbReference>
<dbReference type="SUPFAM" id="SSF143975">
    <property type="entry name" value="IlvD/EDD N-terminal domain-like"/>
    <property type="match status" value="1"/>
</dbReference>
<dbReference type="SUPFAM" id="SSF52016">
    <property type="entry name" value="LeuD/IlvD-like"/>
    <property type="match status" value="1"/>
</dbReference>
<dbReference type="PROSITE" id="PS00886">
    <property type="entry name" value="ILVD_EDD_1"/>
    <property type="match status" value="1"/>
</dbReference>
<dbReference type="PROSITE" id="PS00887">
    <property type="entry name" value="ILVD_EDD_2"/>
    <property type="match status" value="1"/>
</dbReference>
<feature type="chain" id="PRO_1000116493" description="Dihydroxy-acid dehydratase">
    <location>
        <begin position="1"/>
        <end position="612"/>
    </location>
</feature>
<feature type="active site" description="Proton acceptor" evidence="1">
    <location>
        <position position="517"/>
    </location>
</feature>
<feature type="binding site" evidence="1">
    <location>
        <position position="81"/>
    </location>
    <ligand>
        <name>Mg(2+)</name>
        <dbReference type="ChEBI" id="CHEBI:18420"/>
    </ligand>
</feature>
<feature type="binding site" evidence="1">
    <location>
        <position position="122"/>
    </location>
    <ligand>
        <name>[2Fe-2S] cluster</name>
        <dbReference type="ChEBI" id="CHEBI:190135"/>
    </ligand>
</feature>
<feature type="binding site" evidence="1">
    <location>
        <position position="123"/>
    </location>
    <ligand>
        <name>Mg(2+)</name>
        <dbReference type="ChEBI" id="CHEBI:18420"/>
    </ligand>
</feature>
<feature type="binding site" description="via carbamate group" evidence="1">
    <location>
        <position position="124"/>
    </location>
    <ligand>
        <name>Mg(2+)</name>
        <dbReference type="ChEBI" id="CHEBI:18420"/>
    </ligand>
</feature>
<feature type="binding site" evidence="1">
    <location>
        <position position="195"/>
    </location>
    <ligand>
        <name>[2Fe-2S] cluster</name>
        <dbReference type="ChEBI" id="CHEBI:190135"/>
    </ligand>
</feature>
<feature type="binding site" evidence="1">
    <location>
        <position position="491"/>
    </location>
    <ligand>
        <name>Mg(2+)</name>
        <dbReference type="ChEBI" id="CHEBI:18420"/>
    </ligand>
</feature>
<feature type="modified residue" description="N6-carboxylysine" evidence="1">
    <location>
        <position position="124"/>
    </location>
</feature>
<reference key="1">
    <citation type="journal article" date="2009" name="J. Bacteriol.">
        <title>Genome sequences of three Agrobacterium biovars help elucidate the evolution of multichromosome genomes in bacteria.</title>
        <authorList>
            <person name="Slater S.C."/>
            <person name="Goldman B.S."/>
            <person name="Goodner B."/>
            <person name="Setubal J.C."/>
            <person name="Farrand S.K."/>
            <person name="Nester E.W."/>
            <person name="Burr T.J."/>
            <person name="Banta L."/>
            <person name="Dickerman A.W."/>
            <person name="Paulsen I."/>
            <person name="Otten L."/>
            <person name="Suen G."/>
            <person name="Welch R."/>
            <person name="Almeida N.F."/>
            <person name="Arnold F."/>
            <person name="Burton O.T."/>
            <person name="Du Z."/>
            <person name="Ewing A."/>
            <person name="Godsy E."/>
            <person name="Heisel S."/>
            <person name="Houmiel K.L."/>
            <person name="Jhaveri J."/>
            <person name="Lu J."/>
            <person name="Miller N.M."/>
            <person name="Norton S."/>
            <person name="Chen Q."/>
            <person name="Phoolcharoen W."/>
            <person name="Ohlin V."/>
            <person name="Ondrusek D."/>
            <person name="Pride N."/>
            <person name="Stricklin S.L."/>
            <person name="Sun J."/>
            <person name="Wheeler C."/>
            <person name="Wilson L."/>
            <person name="Zhu H."/>
            <person name="Wood D.W."/>
        </authorList>
    </citation>
    <scope>NUCLEOTIDE SEQUENCE [LARGE SCALE GENOMIC DNA]</scope>
    <source>
        <strain>K84 / ATCC BAA-868</strain>
    </source>
</reference>
<organism>
    <name type="scientific">Rhizobium rhizogenes (strain K84 / ATCC BAA-868)</name>
    <name type="common">Agrobacterium radiobacter</name>
    <dbReference type="NCBI Taxonomy" id="311403"/>
    <lineage>
        <taxon>Bacteria</taxon>
        <taxon>Pseudomonadati</taxon>
        <taxon>Pseudomonadota</taxon>
        <taxon>Alphaproteobacteria</taxon>
        <taxon>Hyphomicrobiales</taxon>
        <taxon>Rhizobiaceae</taxon>
        <taxon>Rhizobium/Agrobacterium group</taxon>
        <taxon>Rhizobium</taxon>
    </lineage>
</organism>
<name>ILVD_RHIR8</name>
<keyword id="KW-0001">2Fe-2S</keyword>
<keyword id="KW-0028">Amino-acid biosynthesis</keyword>
<keyword id="KW-0100">Branched-chain amino acid biosynthesis</keyword>
<keyword id="KW-0408">Iron</keyword>
<keyword id="KW-0411">Iron-sulfur</keyword>
<keyword id="KW-0456">Lyase</keyword>
<keyword id="KW-0460">Magnesium</keyword>
<keyword id="KW-0479">Metal-binding</keyword>
<proteinExistence type="inferred from homology"/>
<accession>B9JDW2</accession>
<protein>
    <recommendedName>
        <fullName evidence="1">Dihydroxy-acid dehydratase</fullName>
        <shortName evidence="1">DAD</shortName>
        <ecNumber evidence="1">4.2.1.9</ecNumber>
    </recommendedName>
</protein>
<sequence>MPAYRSRTTTHGRNMAGARGLWRATGMKDSDFGKPIIAVVNSFTQFVPGHVHLKDLGQLVAREIEAAGGVAKEFNTIAVDDGIAMGHDGMLYSLPSRELIADSVEYMVNAHCADAMVCISNCDKITPGMLMASLRLNIPTVFVSGGPMEAGKVIMHGKKVALDLVDAMVAAADDKISDEDVAVIERSACPTCGSCSGMFTANSMNCLTEALGLSLPGNGSTLATHSDRKELFLEAGRRVVALAKRYYEQDDVTALPRTIASKGAFENAMALDIAMGGSTNTVLHILAAAHEGEIDFTMDDIDRLSRRVPCLSKVAPAKADVHMEDVHRAGGIMAILGELNRAGLLNADLPTVHAPTLGEALAQWDIAVTDNKAALELFSAAPGGVPTQVAFSQSARWEELDLDREKGVIRDAQHPFSKDGGLAVLKGNLALDGCIVKTAGVDESILKFSGPAKVFESQDSAVKGILSNQVVAGDVVVIRYEGPKGGPGMQEMLYPTSYLKSKGLGKACALITDGRFSGGTSGLSIGHASPEAANGGTIGLVREGDMIDIDIPNRTISLRVDEAELAARREAQNAKGWFPAEKRKRNVTTALKAYAAFATSADRGAVRDLGGK</sequence>